<reference key="1">
    <citation type="journal article" date="1992" name="J. Bacteriol.">
        <title>Identification of acoR, a regulatory gene for the expression of genes essential for acetoin catabolism in Alcaligenes eutrophus H16.</title>
        <authorList>
            <person name="Krueger N."/>
            <person name="Steinbuechel A."/>
        </authorList>
    </citation>
    <scope>NUCLEOTIDE SEQUENCE [GENOMIC DNA]</scope>
    <scope>PROTEIN SEQUENCE OF 1-10</scope>
</reference>
<reference key="2">
    <citation type="journal article" date="2006" name="Nat. Biotechnol.">
        <title>Genome sequence of the bioplastic-producing 'Knallgas' bacterium Ralstonia eutropha H16.</title>
        <authorList>
            <person name="Pohlmann A."/>
            <person name="Fricke W.F."/>
            <person name="Reinecke F."/>
            <person name="Kusian B."/>
            <person name="Liesegang H."/>
            <person name="Cramm R."/>
            <person name="Eitinger T."/>
            <person name="Ewering C."/>
            <person name="Poetter M."/>
            <person name="Schwartz E."/>
            <person name="Strittmatter A."/>
            <person name="Voss I."/>
            <person name="Gottschalk G."/>
            <person name="Steinbuechel A."/>
            <person name="Friedrich B."/>
            <person name="Bowien B."/>
        </authorList>
    </citation>
    <scope>NUCLEOTIDE SEQUENCE [LARGE SCALE GENOMIC DNA]</scope>
    <source>
        <strain>ATCC 17699 / DSM 428 / KCTC 22496 / NCIMB 10442 / H16 / Stanier 337</strain>
    </source>
</reference>
<gene>
    <name type="primary">acoR</name>
    <name type="ordered locus">H16_B0142</name>
</gene>
<protein>
    <recommendedName>
        <fullName>Acetoin catabolism regulatory protein</fullName>
    </recommendedName>
</protein>
<accession>P28614</accession>
<accession>Q0K4X6</accession>
<proteinExistence type="evidence at protein level"/>
<dbReference type="EMBL" id="M90471">
    <property type="protein sequence ID" value="AAA21944.1"/>
    <property type="molecule type" value="Genomic_DNA"/>
</dbReference>
<dbReference type="EMBL" id="AM260480">
    <property type="protein sequence ID" value="CAJ94948.1"/>
    <property type="molecule type" value="Genomic_DNA"/>
</dbReference>
<dbReference type="PIR" id="A42890">
    <property type="entry name" value="A42890"/>
</dbReference>
<dbReference type="RefSeq" id="WP_011616377.1">
    <property type="nucleotide sequence ID" value="NC_008314.1"/>
</dbReference>
<dbReference type="SMR" id="P28614"/>
<dbReference type="STRING" id="381666.H16_B0142"/>
<dbReference type="KEGG" id="reh:H16_B0142"/>
<dbReference type="eggNOG" id="COG3284">
    <property type="taxonomic scope" value="Bacteria"/>
</dbReference>
<dbReference type="HOGENOM" id="CLU_000445_8_12_4"/>
<dbReference type="OrthoDB" id="9761705at2"/>
<dbReference type="Proteomes" id="UP000008210">
    <property type="component" value="Chromosome 2"/>
</dbReference>
<dbReference type="GO" id="GO:0005524">
    <property type="term" value="F:ATP binding"/>
    <property type="evidence" value="ECO:0007669"/>
    <property type="project" value="UniProtKB-KW"/>
</dbReference>
<dbReference type="GO" id="GO:0016887">
    <property type="term" value="F:ATP hydrolysis activity"/>
    <property type="evidence" value="ECO:0007669"/>
    <property type="project" value="InterPro"/>
</dbReference>
<dbReference type="GO" id="GO:0043565">
    <property type="term" value="F:sequence-specific DNA binding"/>
    <property type="evidence" value="ECO:0007669"/>
    <property type="project" value="InterPro"/>
</dbReference>
<dbReference type="GO" id="GO:0045150">
    <property type="term" value="P:acetoin catabolic process"/>
    <property type="evidence" value="ECO:0007669"/>
    <property type="project" value="UniProtKB-KW"/>
</dbReference>
<dbReference type="GO" id="GO:0000160">
    <property type="term" value="P:phosphorelay signal transduction system"/>
    <property type="evidence" value="ECO:0007669"/>
    <property type="project" value="UniProtKB-KW"/>
</dbReference>
<dbReference type="GO" id="GO:0006355">
    <property type="term" value="P:regulation of DNA-templated transcription"/>
    <property type="evidence" value="ECO:0007669"/>
    <property type="project" value="InterPro"/>
</dbReference>
<dbReference type="CDD" id="cd00009">
    <property type="entry name" value="AAA"/>
    <property type="match status" value="1"/>
</dbReference>
<dbReference type="FunFam" id="3.40.50.300:FF:000006">
    <property type="entry name" value="DNA-binding transcriptional regulator NtrC"/>
    <property type="match status" value="1"/>
</dbReference>
<dbReference type="Gene3D" id="1.10.8.60">
    <property type="match status" value="1"/>
</dbReference>
<dbReference type="Gene3D" id="3.30.450.40">
    <property type="match status" value="1"/>
</dbReference>
<dbReference type="Gene3D" id="1.10.10.60">
    <property type="entry name" value="Homeodomain-like"/>
    <property type="match status" value="1"/>
</dbReference>
<dbReference type="Gene3D" id="3.40.50.300">
    <property type="entry name" value="P-loop containing nucleotide triphosphate hydrolases"/>
    <property type="match status" value="1"/>
</dbReference>
<dbReference type="InterPro" id="IPR003593">
    <property type="entry name" value="AAA+_ATPase"/>
</dbReference>
<dbReference type="InterPro" id="IPR003018">
    <property type="entry name" value="GAF"/>
</dbReference>
<dbReference type="InterPro" id="IPR029016">
    <property type="entry name" value="GAF-like_dom_sf"/>
</dbReference>
<dbReference type="InterPro" id="IPR009057">
    <property type="entry name" value="Homeodomain-like_sf"/>
</dbReference>
<dbReference type="InterPro" id="IPR002197">
    <property type="entry name" value="HTH_Fis"/>
</dbReference>
<dbReference type="InterPro" id="IPR027417">
    <property type="entry name" value="P-loop_NTPase"/>
</dbReference>
<dbReference type="InterPro" id="IPR002078">
    <property type="entry name" value="Sigma_54_int"/>
</dbReference>
<dbReference type="InterPro" id="IPR025662">
    <property type="entry name" value="Sigma_54_int_dom_ATP-bd_1"/>
</dbReference>
<dbReference type="InterPro" id="IPR025943">
    <property type="entry name" value="Sigma_54_int_dom_ATP-bd_2"/>
</dbReference>
<dbReference type="InterPro" id="IPR025944">
    <property type="entry name" value="Sigma_54_int_dom_CS"/>
</dbReference>
<dbReference type="PANTHER" id="PTHR32071">
    <property type="entry name" value="TRANSCRIPTIONAL REGULATORY PROTEIN"/>
    <property type="match status" value="1"/>
</dbReference>
<dbReference type="PANTHER" id="PTHR32071:SF77">
    <property type="entry name" value="TRANSCRIPTIONAL REGULATORY PROTEIN"/>
    <property type="match status" value="1"/>
</dbReference>
<dbReference type="Pfam" id="PF01590">
    <property type="entry name" value="GAF"/>
    <property type="match status" value="1"/>
</dbReference>
<dbReference type="Pfam" id="PF02954">
    <property type="entry name" value="HTH_8"/>
    <property type="match status" value="1"/>
</dbReference>
<dbReference type="Pfam" id="PF00158">
    <property type="entry name" value="Sigma54_activat"/>
    <property type="match status" value="1"/>
</dbReference>
<dbReference type="PRINTS" id="PR01590">
    <property type="entry name" value="HTHFIS"/>
</dbReference>
<dbReference type="SMART" id="SM00382">
    <property type="entry name" value="AAA"/>
    <property type="match status" value="1"/>
</dbReference>
<dbReference type="SUPFAM" id="SSF55781">
    <property type="entry name" value="GAF domain-like"/>
    <property type="match status" value="1"/>
</dbReference>
<dbReference type="SUPFAM" id="SSF46689">
    <property type="entry name" value="Homeodomain-like"/>
    <property type="match status" value="1"/>
</dbReference>
<dbReference type="SUPFAM" id="SSF52540">
    <property type="entry name" value="P-loop containing nucleoside triphosphate hydrolases"/>
    <property type="match status" value="1"/>
</dbReference>
<dbReference type="PROSITE" id="PS00675">
    <property type="entry name" value="SIGMA54_INTERACT_1"/>
    <property type="match status" value="1"/>
</dbReference>
<dbReference type="PROSITE" id="PS00676">
    <property type="entry name" value="SIGMA54_INTERACT_2"/>
    <property type="match status" value="1"/>
</dbReference>
<dbReference type="PROSITE" id="PS00688">
    <property type="entry name" value="SIGMA54_INTERACT_3"/>
    <property type="match status" value="1"/>
</dbReference>
<dbReference type="PROSITE" id="PS50045">
    <property type="entry name" value="SIGMA54_INTERACT_4"/>
    <property type="match status" value="1"/>
</dbReference>
<evidence type="ECO:0000250" key="1"/>
<evidence type="ECO:0000255" key="2">
    <source>
        <dbReference type="PROSITE-ProRule" id="PRU00193"/>
    </source>
</evidence>
<evidence type="ECO:0000256" key="3">
    <source>
        <dbReference type="SAM" id="MobiDB-lite"/>
    </source>
</evidence>
<evidence type="ECO:0000305" key="4"/>
<sequence>MDLRQREHIETVVQATTYLAPPAVLADRIAHDAIIQNSWRRCVHQYGLDPSRMQEARILPQPRLREHQERIDDFARIARHGLQSLYGQVAGLGYVVLLTDAQGVTVDYIGEARSDAALRHAGLYLGAEWSESGAGTCAVGTALATGQALTVHQADHFDATHIPLTCTAAPLFDTHGNLHAILDISALTSPQAKDSQGLALQMVRIYAAHIENANFLRAHRRDWILKLNVAPEFVDVNPEYLLALDEAGRIVGHNHRARLMLEGELGGAPGATVLGQRFETLFDARLEDLGHYVYSRPSEQRLVALTRSGGLLYLSVLPPALRWQAPPAETQVAMPDALAALTGGDAALQLQLQRAARLVDSPINLLIHGETGSGKEFLAKALHLASARRGGPFVAVNCAAIPETLIESELFGHLPNSFSGAGPRGKRGLIQEADGGTLFLDEIGDMPRELQSRLLRVLAEGEVLPVGAARPVPVRLRVISATHHSLEQLVADGRFREDLYYRLNGARFTLPPLRARTDLDWLVRKLLQEGSAEGSEITLSPAARERLHRHRWPGNLRELRNVLEYARAVCADGYIDVPDLPDSLAGPAPSAALPQPGPAQSPAAAPFDPHQLPPEGMLLMQYLRASGWNLSAVARQIGVSRMTLYRRMERYGIQSPNRRDGGPEPTDA</sequence>
<keyword id="KW-0006">Acetoin catabolism</keyword>
<keyword id="KW-0010">Activator</keyword>
<keyword id="KW-0067">ATP-binding</keyword>
<keyword id="KW-0903">Direct protein sequencing</keyword>
<keyword id="KW-0238">DNA-binding</keyword>
<keyword id="KW-0547">Nucleotide-binding</keyword>
<keyword id="KW-1185">Reference proteome</keyword>
<keyword id="KW-0804">Transcription</keyword>
<keyword id="KW-0805">Transcription regulation</keyword>
<keyword id="KW-0902">Two-component regulatory system</keyword>
<name>ACOR_CUPNH</name>
<organism>
    <name type="scientific">Cupriavidus necator (strain ATCC 17699 / DSM 428 / KCTC 22496 / NCIMB 10442 / H16 / Stanier 337)</name>
    <name type="common">Ralstonia eutropha</name>
    <dbReference type="NCBI Taxonomy" id="381666"/>
    <lineage>
        <taxon>Bacteria</taxon>
        <taxon>Pseudomonadati</taxon>
        <taxon>Pseudomonadota</taxon>
        <taxon>Betaproteobacteria</taxon>
        <taxon>Burkholderiales</taxon>
        <taxon>Burkholderiaceae</taxon>
        <taxon>Cupriavidus</taxon>
    </lineage>
</organism>
<feature type="chain" id="PRO_0000081318" description="Acetoin catabolism regulatory protein">
    <location>
        <begin position="1"/>
        <end position="668"/>
    </location>
</feature>
<feature type="domain" description="Sigma-54 factor interaction" evidence="2">
    <location>
        <begin position="341"/>
        <end position="570"/>
    </location>
</feature>
<feature type="DNA-binding region" description="H-T-H motif" evidence="1">
    <location>
        <begin position="630"/>
        <end position="649"/>
    </location>
</feature>
<feature type="region of interest" description="Disordered" evidence="3">
    <location>
        <begin position="586"/>
        <end position="611"/>
    </location>
</feature>
<feature type="compositionally biased region" description="Low complexity" evidence="3">
    <location>
        <begin position="586"/>
        <end position="606"/>
    </location>
</feature>
<feature type="binding site" evidence="2">
    <location>
        <begin position="369"/>
        <end position="376"/>
    </location>
    <ligand>
        <name>ATP</name>
        <dbReference type="ChEBI" id="CHEBI:30616"/>
    </ligand>
</feature>
<feature type="binding site" evidence="2">
    <location>
        <begin position="433"/>
        <end position="442"/>
    </location>
    <ligand>
        <name>ATP</name>
        <dbReference type="ChEBI" id="CHEBI:30616"/>
    </ligand>
</feature>
<feature type="sequence conflict" description="In Ref. 1; AAA21944." evidence="4" ref="1">
    <original>E</original>
    <variation>Q</variation>
    <location>
        <position position="211"/>
    </location>
</feature>
<comment type="function">
    <text>Required for sigma-54-dependent transcription of acoXABC.</text>
</comment>